<gene>
    <name evidence="1" type="primary">apaH</name>
    <name type="ordered locus">ECP_0051</name>
</gene>
<feature type="chain" id="PRO_1000012058" description="Bis(5'-nucleosyl)-tetraphosphatase, symmetrical">
    <location>
        <begin position="1"/>
        <end position="282"/>
    </location>
</feature>
<protein>
    <recommendedName>
        <fullName evidence="1">Bis(5'-nucleosyl)-tetraphosphatase, symmetrical</fullName>
        <ecNumber evidence="1">3.6.1.41</ecNumber>
    </recommendedName>
    <alternativeName>
        <fullName evidence="1">Ap4A hydrolase</fullName>
    </alternativeName>
    <alternativeName>
        <fullName evidence="1">Diadenosine 5',5'''-P1,P4-tetraphosphate pyrophosphohydrolase</fullName>
    </alternativeName>
    <alternativeName>
        <fullName evidence="1">Diadenosine tetraphosphatase</fullName>
    </alternativeName>
</protein>
<proteinExistence type="inferred from homology"/>
<reference key="1">
    <citation type="journal article" date="2006" name="Mol. Microbiol.">
        <title>Role of pathogenicity island-associated integrases in the genome plasticity of uropathogenic Escherichia coli strain 536.</title>
        <authorList>
            <person name="Hochhut B."/>
            <person name="Wilde C."/>
            <person name="Balling G."/>
            <person name="Middendorf B."/>
            <person name="Dobrindt U."/>
            <person name="Brzuszkiewicz E."/>
            <person name="Gottschalk G."/>
            <person name="Carniel E."/>
            <person name="Hacker J."/>
        </authorList>
    </citation>
    <scope>NUCLEOTIDE SEQUENCE [LARGE SCALE GENOMIC DNA]</scope>
    <source>
        <strain>536 / UPEC</strain>
    </source>
</reference>
<comment type="function">
    <text evidence="1">Hydrolyzes diadenosine 5',5'''-P1,P4-tetraphosphate to yield ADP.</text>
</comment>
<comment type="catalytic activity">
    <reaction evidence="1">
        <text>P(1),P(4)-bis(5'-adenosyl) tetraphosphate + H2O = 2 ADP + 2 H(+)</text>
        <dbReference type="Rhea" id="RHEA:24252"/>
        <dbReference type="ChEBI" id="CHEBI:15377"/>
        <dbReference type="ChEBI" id="CHEBI:15378"/>
        <dbReference type="ChEBI" id="CHEBI:58141"/>
        <dbReference type="ChEBI" id="CHEBI:456216"/>
        <dbReference type="EC" id="3.6.1.41"/>
    </reaction>
</comment>
<comment type="similarity">
    <text evidence="1">Belongs to the Ap4A hydrolase family.</text>
</comment>
<organism>
    <name type="scientific">Escherichia coli O6:K15:H31 (strain 536 / UPEC)</name>
    <dbReference type="NCBI Taxonomy" id="362663"/>
    <lineage>
        <taxon>Bacteria</taxon>
        <taxon>Pseudomonadati</taxon>
        <taxon>Pseudomonadota</taxon>
        <taxon>Gammaproteobacteria</taxon>
        <taxon>Enterobacterales</taxon>
        <taxon>Enterobacteriaceae</taxon>
        <taxon>Escherichia</taxon>
    </lineage>
</organism>
<sequence length="282" mass="31568">MATYLIGDVHGCYDELIALLHKVEFTPGKDTLWLTGDLVARGPGSLDVLRYVKSLGDSVRLVLGNHDLHLLAVFAGISRNKPKDRLTPLLEAPDADELLNWLRRQPLLQIDEEKKLVMAHAGITPQWDLQTAKECARDVEAVLSSDSYPFFLDAMYGDMPNNWSPELRGLGRLRFITNAFTRMRFCFPNGQLDMYSKESPEEAPAPLKPWFAIPGPVAEEYNIAFGHWASLEGKGTPEGIYALDTGCCWGGTLTCLRWEDKQYFVQPSNRHKDLSEGEAVAS</sequence>
<name>APAH_ECOL5</name>
<dbReference type="EC" id="3.6.1.41" evidence="1"/>
<dbReference type="EMBL" id="CP000247">
    <property type="protein sequence ID" value="ABG68093.1"/>
    <property type="molecule type" value="Genomic_DNA"/>
</dbReference>
<dbReference type="RefSeq" id="WP_000257181.1">
    <property type="nucleotide sequence ID" value="NC_008253.1"/>
</dbReference>
<dbReference type="SMR" id="Q0TLT8"/>
<dbReference type="KEGG" id="ecp:ECP_0051"/>
<dbReference type="HOGENOM" id="CLU_056184_2_0_6"/>
<dbReference type="Proteomes" id="UP000009182">
    <property type="component" value="Chromosome"/>
</dbReference>
<dbReference type="GO" id="GO:0008803">
    <property type="term" value="F:bis(5'-nucleosyl)-tetraphosphatase (symmetrical) activity"/>
    <property type="evidence" value="ECO:0007669"/>
    <property type="project" value="UniProtKB-UniRule"/>
</dbReference>
<dbReference type="CDD" id="cd07422">
    <property type="entry name" value="MPP_ApaH"/>
    <property type="match status" value="1"/>
</dbReference>
<dbReference type="FunFam" id="3.60.21.10:FF:000013">
    <property type="entry name" value="Bis(5'-nucleosyl)-tetraphosphatase, symmetrical"/>
    <property type="match status" value="1"/>
</dbReference>
<dbReference type="Gene3D" id="3.60.21.10">
    <property type="match status" value="1"/>
</dbReference>
<dbReference type="HAMAP" id="MF_00199">
    <property type="entry name" value="ApaH"/>
    <property type="match status" value="1"/>
</dbReference>
<dbReference type="InterPro" id="IPR004617">
    <property type="entry name" value="ApaH"/>
</dbReference>
<dbReference type="InterPro" id="IPR004843">
    <property type="entry name" value="Calcineurin-like_PHP_ApaH"/>
</dbReference>
<dbReference type="InterPro" id="IPR029052">
    <property type="entry name" value="Metallo-depent_PP-like"/>
</dbReference>
<dbReference type="NCBIfam" id="TIGR00668">
    <property type="entry name" value="apaH"/>
    <property type="match status" value="1"/>
</dbReference>
<dbReference type="NCBIfam" id="NF001204">
    <property type="entry name" value="PRK00166.1"/>
    <property type="match status" value="1"/>
</dbReference>
<dbReference type="PANTHER" id="PTHR40942">
    <property type="match status" value="1"/>
</dbReference>
<dbReference type="PANTHER" id="PTHR40942:SF4">
    <property type="entry name" value="CYTOCHROME C5"/>
    <property type="match status" value="1"/>
</dbReference>
<dbReference type="Pfam" id="PF00149">
    <property type="entry name" value="Metallophos"/>
    <property type="match status" value="1"/>
</dbReference>
<dbReference type="PIRSF" id="PIRSF000903">
    <property type="entry name" value="B5n-ttraPtase_sm"/>
    <property type="match status" value="1"/>
</dbReference>
<dbReference type="SUPFAM" id="SSF56300">
    <property type="entry name" value="Metallo-dependent phosphatases"/>
    <property type="match status" value="1"/>
</dbReference>
<accession>Q0TLT8</accession>
<evidence type="ECO:0000255" key="1">
    <source>
        <dbReference type="HAMAP-Rule" id="MF_00199"/>
    </source>
</evidence>
<keyword id="KW-0378">Hydrolase</keyword>